<gene>
    <name type="primary">RABH1B</name>
    <name type="synonym">RAB6A</name>
    <name type="ordered locus">At2g44610</name>
    <name type="ORF">F16B22.10</name>
</gene>
<sequence length="208" mass="23130">MAPVSALAKYKLVFLGDQSVGKTSIITRFMYDKFDNTYQATIGIDFLSKTMYLEDRTVRLQLWDTAGQERFRSLIPSYIRDSSVAVIVYDVASRQSFLNTTKWIDEVRTERGSDVIVVLVGNKTDLVDKRQVSIEEAEAKARELNVMFIETSAKAGFNIKALFRKIAAALPGMETLSSTKQEDMVDVNLKSSNANASLAQQQSGGCSC</sequence>
<name>RAH1B_ARATH</name>
<protein>
    <recommendedName>
        <fullName>Ras-related protein RABH1b</fullName>
        <shortName>AtRABH1b</shortName>
    </recommendedName>
    <alternativeName>
        <fullName>Ras-related protein Rab6A</fullName>
        <shortName>AtRab6A</shortName>
    </alternativeName>
</protein>
<proteinExistence type="evidence at protein level"/>
<evidence type="ECO:0000250" key="1"/>
<evidence type="ECO:0000269" key="2">
    <source>
    </source>
</evidence>
<evidence type="ECO:0000269" key="3">
    <source>
    </source>
</evidence>
<evidence type="ECO:0000269" key="4">
    <source>
    </source>
</evidence>
<evidence type="ECO:0000305" key="5"/>
<evidence type="ECO:0000305" key="6">
    <source>
    </source>
</evidence>
<accession>O80501</accession>
<dbReference type="EMBL" id="AC003672">
    <property type="protein sequence ID" value="AAC27463.1"/>
    <property type="molecule type" value="Genomic_DNA"/>
</dbReference>
<dbReference type="EMBL" id="CP002685">
    <property type="protein sequence ID" value="AEC10447.1"/>
    <property type="molecule type" value="Genomic_DNA"/>
</dbReference>
<dbReference type="EMBL" id="BT025780">
    <property type="protein sequence ID" value="ABF83670.1"/>
    <property type="molecule type" value="mRNA"/>
</dbReference>
<dbReference type="EMBL" id="AK226988">
    <property type="protein sequence ID" value="BAE99055.1"/>
    <property type="molecule type" value="mRNA"/>
</dbReference>
<dbReference type="EMBL" id="AY087904">
    <property type="protein sequence ID" value="AAM65455.1"/>
    <property type="molecule type" value="mRNA"/>
</dbReference>
<dbReference type="PIR" id="T01588">
    <property type="entry name" value="T01588"/>
</dbReference>
<dbReference type="RefSeq" id="NP_181989.1">
    <property type="nucleotide sequence ID" value="NM_130025.5"/>
</dbReference>
<dbReference type="SMR" id="O80501"/>
<dbReference type="BioGRID" id="4405">
    <property type="interactions" value="4"/>
</dbReference>
<dbReference type="FunCoup" id="O80501">
    <property type="interactions" value="3071"/>
</dbReference>
<dbReference type="IntAct" id="O80501">
    <property type="interactions" value="1"/>
</dbReference>
<dbReference type="STRING" id="3702.O80501"/>
<dbReference type="iPTMnet" id="O80501"/>
<dbReference type="PaxDb" id="3702-AT2G44610.1"/>
<dbReference type="ProteomicsDB" id="234994"/>
<dbReference type="EnsemblPlants" id="AT2G44610.1">
    <property type="protein sequence ID" value="AT2G44610.1"/>
    <property type="gene ID" value="AT2G44610"/>
</dbReference>
<dbReference type="GeneID" id="819069"/>
<dbReference type="Gramene" id="AT2G44610.1">
    <property type="protein sequence ID" value="AT2G44610.1"/>
    <property type="gene ID" value="AT2G44610"/>
</dbReference>
<dbReference type="KEGG" id="ath:AT2G44610"/>
<dbReference type="Araport" id="AT2G44610"/>
<dbReference type="TAIR" id="AT2G44610">
    <property type="gene designation" value="RAB6A"/>
</dbReference>
<dbReference type="eggNOG" id="KOG0094">
    <property type="taxonomic scope" value="Eukaryota"/>
</dbReference>
<dbReference type="HOGENOM" id="CLU_041217_10_2_1"/>
<dbReference type="InParanoid" id="O80501"/>
<dbReference type="OMA" id="NCFFRET"/>
<dbReference type="OrthoDB" id="1065538at2759"/>
<dbReference type="PhylomeDB" id="O80501"/>
<dbReference type="PRO" id="PR:O80501"/>
<dbReference type="Proteomes" id="UP000006548">
    <property type="component" value="Chromosome 2"/>
</dbReference>
<dbReference type="ExpressionAtlas" id="O80501">
    <property type="expression patterns" value="baseline and differential"/>
</dbReference>
<dbReference type="GO" id="GO:0005829">
    <property type="term" value="C:cytosol"/>
    <property type="evidence" value="ECO:0000314"/>
    <property type="project" value="UniProtKB"/>
</dbReference>
<dbReference type="GO" id="GO:0005768">
    <property type="term" value="C:endosome"/>
    <property type="evidence" value="ECO:0007005"/>
    <property type="project" value="TAIR"/>
</dbReference>
<dbReference type="GO" id="GO:0005794">
    <property type="term" value="C:Golgi apparatus"/>
    <property type="evidence" value="ECO:0007005"/>
    <property type="project" value="TAIR"/>
</dbReference>
<dbReference type="GO" id="GO:0000139">
    <property type="term" value="C:Golgi membrane"/>
    <property type="evidence" value="ECO:0000314"/>
    <property type="project" value="UniProtKB"/>
</dbReference>
<dbReference type="GO" id="GO:0016020">
    <property type="term" value="C:membrane"/>
    <property type="evidence" value="ECO:0000314"/>
    <property type="project" value="TAIR"/>
</dbReference>
<dbReference type="GO" id="GO:0000325">
    <property type="term" value="C:plant-type vacuole"/>
    <property type="evidence" value="ECO:0007005"/>
    <property type="project" value="TAIR"/>
</dbReference>
<dbReference type="GO" id="GO:0005886">
    <property type="term" value="C:plasma membrane"/>
    <property type="evidence" value="ECO:0007005"/>
    <property type="project" value="TAIR"/>
</dbReference>
<dbReference type="GO" id="GO:0009506">
    <property type="term" value="C:plasmodesma"/>
    <property type="evidence" value="ECO:0007005"/>
    <property type="project" value="TAIR"/>
</dbReference>
<dbReference type="GO" id="GO:0005802">
    <property type="term" value="C:trans-Golgi network"/>
    <property type="evidence" value="ECO:0007005"/>
    <property type="project" value="TAIR"/>
</dbReference>
<dbReference type="GO" id="GO:0005525">
    <property type="term" value="F:GTP binding"/>
    <property type="evidence" value="ECO:0000314"/>
    <property type="project" value="UniProtKB"/>
</dbReference>
<dbReference type="GO" id="GO:0003924">
    <property type="term" value="F:GTPase activity"/>
    <property type="evidence" value="ECO:0007669"/>
    <property type="project" value="InterPro"/>
</dbReference>
<dbReference type="GO" id="GO:0006887">
    <property type="term" value="P:exocytosis"/>
    <property type="evidence" value="ECO:0000315"/>
    <property type="project" value="TAIR"/>
</dbReference>
<dbReference type="GO" id="GO:0052324">
    <property type="term" value="P:plant-type cell wall cellulose biosynthetic process"/>
    <property type="evidence" value="ECO:0000315"/>
    <property type="project" value="TAIR"/>
</dbReference>
<dbReference type="GO" id="GO:0015031">
    <property type="term" value="P:protein transport"/>
    <property type="evidence" value="ECO:0007669"/>
    <property type="project" value="UniProtKB-KW"/>
</dbReference>
<dbReference type="GO" id="GO:0001558">
    <property type="term" value="P:regulation of cell growth"/>
    <property type="evidence" value="ECO:0000315"/>
    <property type="project" value="TAIR"/>
</dbReference>
<dbReference type="CDD" id="cd01861">
    <property type="entry name" value="Rab6"/>
    <property type="match status" value="1"/>
</dbReference>
<dbReference type="FunFam" id="3.40.50.300:FF:000229">
    <property type="entry name" value="Probable Ras-related protein Rab-6A"/>
    <property type="match status" value="1"/>
</dbReference>
<dbReference type="Gene3D" id="3.40.50.300">
    <property type="entry name" value="P-loop containing nucleotide triphosphate hydrolases"/>
    <property type="match status" value="1"/>
</dbReference>
<dbReference type="InterPro" id="IPR027417">
    <property type="entry name" value="P-loop_NTPase"/>
</dbReference>
<dbReference type="InterPro" id="IPR050227">
    <property type="entry name" value="Rab"/>
</dbReference>
<dbReference type="InterPro" id="IPR005225">
    <property type="entry name" value="Small_GTP-bd"/>
</dbReference>
<dbReference type="InterPro" id="IPR001806">
    <property type="entry name" value="Small_GTPase"/>
</dbReference>
<dbReference type="NCBIfam" id="TIGR00231">
    <property type="entry name" value="small_GTP"/>
    <property type="match status" value="1"/>
</dbReference>
<dbReference type="PANTHER" id="PTHR47977">
    <property type="entry name" value="RAS-RELATED PROTEIN RAB"/>
    <property type="match status" value="1"/>
</dbReference>
<dbReference type="Pfam" id="PF00071">
    <property type="entry name" value="Ras"/>
    <property type="match status" value="1"/>
</dbReference>
<dbReference type="PRINTS" id="PR00449">
    <property type="entry name" value="RASTRNSFRMNG"/>
</dbReference>
<dbReference type="SMART" id="SM00175">
    <property type="entry name" value="RAB"/>
    <property type="match status" value="1"/>
</dbReference>
<dbReference type="SMART" id="SM00176">
    <property type="entry name" value="RAN"/>
    <property type="match status" value="1"/>
</dbReference>
<dbReference type="SMART" id="SM00173">
    <property type="entry name" value="RAS"/>
    <property type="match status" value="1"/>
</dbReference>
<dbReference type="SMART" id="SM00174">
    <property type="entry name" value="RHO"/>
    <property type="match status" value="1"/>
</dbReference>
<dbReference type="SUPFAM" id="SSF52540">
    <property type="entry name" value="P-loop containing nucleoside triphosphate hydrolases"/>
    <property type="match status" value="1"/>
</dbReference>
<dbReference type="PROSITE" id="PS51419">
    <property type="entry name" value="RAB"/>
    <property type="match status" value="1"/>
</dbReference>
<reference key="1">
    <citation type="journal article" date="1994" name="Plant Physiol.">
        <title>A small GTP-binding protein from Arabidopsis thaliana functionally complements the yeast YPT6 null mutant.</title>
        <authorList>
            <person name="Bednarek S.Y."/>
            <person name="Reynolds T.L."/>
            <person name="Schroeder M."/>
            <person name="Grabowski R."/>
            <person name="Hengst L."/>
            <person name="Gallwitz D."/>
            <person name="Raikhel N.V."/>
        </authorList>
    </citation>
    <scope>NUCLEOTIDE SEQUENCE [MRNA]</scope>
    <scope>MUTAGENESIS OF ASN-122 AND 206-CYS--CYS-208</scope>
    <scope>TISSUE SPECIFICITY</scope>
</reference>
<reference key="2">
    <citation type="journal article" date="1999" name="Nature">
        <title>Sequence and analysis of chromosome 2 of the plant Arabidopsis thaliana.</title>
        <authorList>
            <person name="Lin X."/>
            <person name="Kaul S."/>
            <person name="Rounsley S.D."/>
            <person name="Shea T.P."/>
            <person name="Benito M.-I."/>
            <person name="Town C.D."/>
            <person name="Fujii C.Y."/>
            <person name="Mason T.M."/>
            <person name="Bowman C.L."/>
            <person name="Barnstead M.E."/>
            <person name="Feldblyum T.V."/>
            <person name="Buell C.R."/>
            <person name="Ketchum K.A."/>
            <person name="Lee J.J."/>
            <person name="Ronning C.M."/>
            <person name="Koo H.L."/>
            <person name="Moffat K.S."/>
            <person name="Cronin L.A."/>
            <person name="Shen M."/>
            <person name="Pai G."/>
            <person name="Van Aken S."/>
            <person name="Umayam L."/>
            <person name="Tallon L.J."/>
            <person name="Gill J.E."/>
            <person name="Adams M.D."/>
            <person name="Carrera A.J."/>
            <person name="Creasy T.H."/>
            <person name="Goodman H.M."/>
            <person name="Somerville C.R."/>
            <person name="Copenhaver G.P."/>
            <person name="Preuss D."/>
            <person name="Nierman W.C."/>
            <person name="White O."/>
            <person name="Eisen J.A."/>
            <person name="Salzberg S.L."/>
            <person name="Fraser C.M."/>
            <person name="Venter J.C."/>
        </authorList>
    </citation>
    <scope>NUCLEOTIDE SEQUENCE [LARGE SCALE GENOMIC DNA]</scope>
    <source>
        <strain>cv. Columbia</strain>
    </source>
</reference>
<reference key="3">
    <citation type="journal article" date="2017" name="Plant J.">
        <title>Araport11: a complete reannotation of the Arabidopsis thaliana reference genome.</title>
        <authorList>
            <person name="Cheng C.Y."/>
            <person name="Krishnakumar V."/>
            <person name="Chan A.P."/>
            <person name="Thibaud-Nissen F."/>
            <person name="Schobel S."/>
            <person name="Town C.D."/>
        </authorList>
    </citation>
    <scope>GENOME REANNOTATION</scope>
    <source>
        <strain>cv. Columbia</strain>
    </source>
</reference>
<reference key="4">
    <citation type="submission" date="2006-06" db="EMBL/GenBank/DDBJ databases">
        <title>Arabidopsis ORF clones.</title>
        <authorList>
            <person name="Kim C.J."/>
            <person name="Chen H."/>
            <person name="Quinitio C."/>
            <person name="Shinn P."/>
            <person name="Ecker J.R."/>
        </authorList>
    </citation>
    <scope>NUCLEOTIDE SEQUENCE [LARGE SCALE MRNA]</scope>
    <source>
        <strain>cv. Columbia</strain>
    </source>
</reference>
<reference key="5">
    <citation type="submission" date="2006-07" db="EMBL/GenBank/DDBJ databases">
        <title>Large-scale analysis of RIKEN Arabidopsis full-length (RAFL) cDNAs.</title>
        <authorList>
            <person name="Totoki Y."/>
            <person name="Seki M."/>
            <person name="Ishida J."/>
            <person name="Nakajima M."/>
            <person name="Enju A."/>
            <person name="Kamiya A."/>
            <person name="Narusaka M."/>
            <person name="Shin-i T."/>
            <person name="Nakagawa M."/>
            <person name="Sakamoto N."/>
            <person name="Oishi K."/>
            <person name="Kohara Y."/>
            <person name="Kobayashi M."/>
            <person name="Toyoda A."/>
            <person name="Sakaki Y."/>
            <person name="Sakurai T."/>
            <person name="Iida K."/>
            <person name="Akiyama K."/>
            <person name="Satou M."/>
            <person name="Toyoda T."/>
            <person name="Konagaya A."/>
            <person name="Carninci P."/>
            <person name="Kawai J."/>
            <person name="Hayashizaki Y."/>
            <person name="Shinozaki K."/>
        </authorList>
    </citation>
    <scope>NUCLEOTIDE SEQUENCE [LARGE SCALE MRNA]</scope>
    <source>
        <strain>cv. Columbia</strain>
    </source>
</reference>
<reference key="6">
    <citation type="submission" date="2002-03" db="EMBL/GenBank/DDBJ databases">
        <title>Full-length cDNA from Arabidopsis thaliana.</title>
        <authorList>
            <person name="Brover V.V."/>
            <person name="Troukhan M.E."/>
            <person name="Alexandrov N.A."/>
            <person name="Lu Y.-P."/>
            <person name="Flavell R.B."/>
            <person name="Feldmann K.A."/>
        </authorList>
    </citation>
    <scope>NUCLEOTIDE SEQUENCE [LARGE SCALE MRNA]</scope>
</reference>
<reference key="7">
    <citation type="journal article" date="2003" name="Plant Physiol.">
        <title>Analysis of the small GTPase gene superfamily of Arabidopsis.</title>
        <authorList>
            <person name="Vernoud V."/>
            <person name="Horton A.C."/>
            <person name="Yang Z."/>
            <person name="Nielsen E."/>
        </authorList>
    </citation>
    <scope>GENE FAMILY</scope>
    <scope>NOMENCLATURE</scope>
</reference>
<reference key="8">
    <citation type="journal article" date="2007" name="J. Exp. Bot.">
        <title>Localization and domain characterization of Arabidopsis golgin candidates.</title>
        <authorList>
            <person name="Latijnhouwers M."/>
            <person name="Gillespie T."/>
            <person name="Boevink P."/>
            <person name="Kriechbaumer V."/>
            <person name="Hawes C."/>
            <person name="Carvalho C.M."/>
        </authorList>
    </citation>
    <scope>INTERACTION WITH GC5</scope>
</reference>
<reference key="9">
    <citation type="journal article" date="2009" name="J. Exp. Bot.">
        <title>AtRAB-H1b and AtRAB-H1c GTPases, homologues of the yeast Ypt6, target reporter proteins to the Golgi when expressed in Nicotiana tabacum and Arabidopsis thaliana.</title>
        <authorList>
            <person name="Johansen J.N."/>
            <person name="Chow C.M."/>
            <person name="Moore I."/>
            <person name="Hawes C."/>
        </authorList>
    </citation>
    <scope>SUBCELLULAR LOCATION</scope>
    <scope>MUTAGENESIS OF THR-23; GLN-68; ASN-122; CYS-206 AND CYS-208</scope>
</reference>
<feature type="chain" id="PRO_0000348542" description="Ras-related protein RABH1b">
    <location>
        <begin position="1"/>
        <end position="208"/>
    </location>
</feature>
<feature type="short sequence motif" description="Effector region" evidence="1">
    <location>
        <begin position="38"/>
        <end position="46"/>
    </location>
</feature>
<feature type="binding site" evidence="1">
    <location>
        <begin position="16"/>
        <end position="23"/>
    </location>
    <ligand>
        <name>GTP</name>
        <dbReference type="ChEBI" id="CHEBI:37565"/>
    </ligand>
</feature>
<feature type="binding site" evidence="1">
    <location>
        <begin position="64"/>
        <end position="68"/>
    </location>
    <ligand>
        <name>GTP</name>
        <dbReference type="ChEBI" id="CHEBI:37565"/>
    </ligand>
</feature>
<feature type="binding site">
    <location>
        <begin position="122"/>
        <end position="125"/>
    </location>
    <ligand>
        <name>GTP</name>
        <dbReference type="ChEBI" id="CHEBI:37565"/>
    </ligand>
</feature>
<feature type="binding site" evidence="1">
    <location>
        <begin position="152"/>
        <end position="153"/>
    </location>
    <ligand>
        <name>GTP</name>
        <dbReference type="ChEBI" id="CHEBI:37565"/>
    </ligand>
</feature>
<feature type="modified residue" description="Cysteine methyl ester" evidence="1">
    <location>
        <position position="208"/>
    </location>
</feature>
<feature type="lipid moiety-binding region" description="S-geranylgeranyl cysteine" evidence="1">
    <location>
        <position position="206"/>
    </location>
</feature>
<feature type="lipid moiety-binding region" description="S-geranylgeranyl cysteine" evidence="1">
    <location>
        <position position="208"/>
    </location>
</feature>
<feature type="mutagenesis site" description="Loss of GTP-binding activity. No effect on targeting to Golgi." evidence="3">
    <original>T</original>
    <variation>N</variation>
    <location>
        <position position="23"/>
    </location>
</feature>
<feature type="mutagenesis site" description="No effect on GTP-binding activity and targeting to Golgi." evidence="3">
    <original>Q</original>
    <variation>L</variation>
    <location>
        <position position="68"/>
    </location>
</feature>
<feature type="mutagenesis site" description="Loss of GTP-binding activity and targeting to Golgi. Loss of GTP-binding activity; when associated with 206-C--C-208 Del." evidence="3 4">
    <original>N</original>
    <variation>I</variation>
    <location>
        <position position="122"/>
    </location>
</feature>
<feature type="mutagenesis site" description="No effect on GTP-binding activity. Loss of GTP-binding activity; when associated with I-122." evidence="4">
    <location>
        <begin position="206"/>
        <end position="208"/>
    </location>
</feature>
<feature type="mutagenesis site" description="Loss of targeting to Golgi; when associated with S-208." evidence="3">
    <original>C</original>
    <variation>S</variation>
    <location>
        <position position="206"/>
    </location>
</feature>
<feature type="mutagenesis site" description="Loss of targeting to Golgi; when associated with S-206." evidence="3">
    <original>C</original>
    <variation>S</variation>
    <location>
        <position position="208"/>
    </location>
</feature>
<keyword id="KW-0963">Cytoplasm</keyword>
<keyword id="KW-0931">ER-Golgi transport</keyword>
<keyword id="KW-0333">Golgi apparatus</keyword>
<keyword id="KW-0342">GTP-binding</keyword>
<keyword id="KW-0449">Lipoprotein</keyword>
<keyword id="KW-0472">Membrane</keyword>
<keyword id="KW-0488">Methylation</keyword>
<keyword id="KW-0547">Nucleotide-binding</keyword>
<keyword id="KW-0636">Prenylation</keyword>
<keyword id="KW-0653">Protein transport</keyword>
<keyword id="KW-1185">Reference proteome</keyword>
<keyword id="KW-0813">Transport</keyword>
<organism>
    <name type="scientific">Arabidopsis thaliana</name>
    <name type="common">Mouse-ear cress</name>
    <dbReference type="NCBI Taxonomy" id="3702"/>
    <lineage>
        <taxon>Eukaryota</taxon>
        <taxon>Viridiplantae</taxon>
        <taxon>Streptophyta</taxon>
        <taxon>Embryophyta</taxon>
        <taxon>Tracheophyta</taxon>
        <taxon>Spermatophyta</taxon>
        <taxon>Magnoliopsida</taxon>
        <taxon>eudicotyledons</taxon>
        <taxon>Gunneridae</taxon>
        <taxon>Pentapetalae</taxon>
        <taxon>rosids</taxon>
        <taxon>malvids</taxon>
        <taxon>Brassicales</taxon>
        <taxon>Brassicaceae</taxon>
        <taxon>Camelineae</taxon>
        <taxon>Arabidopsis</taxon>
    </lineage>
</organism>
<comment type="function">
    <text evidence="1">Protein transport. Regulator of membrane traffic from the Golgi apparatus towards the endoplasmic reticulum (ER). Binds GTP and GDP and possesses intrinsic GTPase activity (By similarity).</text>
</comment>
<comment type="subunit">
    <text evidence="2">Interacts with the C-terminus of GC5, but not with GC3.</text>
</comment>
<comment type="subcellular location">
    <subcellularLocation>
        <location evidence="6">Golgi apparatus membrane</location>
        <topology evidence="6">Lipid-anchor</topology>
    </subcellularLocation>
    <subcellularLocation>
        <location evidence="3">Cytoplasm</location>
        <location evidence="3">Cytosol</location>
    </subcellularLocation>
</comment>
<comment type="tissue specificity">
    <text evidence="4">Expressed in roots, stems, leaves and flowers.</text>
</comment>
<comment type="similarity">
    <text evidence="5">Belongs to the small GTPase superfamily. Rab family.</text>
</comment>